<protein>
    <recommendedName>
        <fullName evidence="1">FMN-dependent NADH:quinone oxidoreductase</fullName>
        <ecNumber evidence="1">1.6.5.-</ecNumber>
    </recommendedName>
    <alternativeName>
        <fullName evidence="1">Azo-dye reductase</fullName>
    </alternativeName>
    <alternativeName>
        <fullName evidence="1">FMN-dependent NADH-azo compound oxidoreductase</fullName>
    </alternativeName>
    <alternativeName>
        <fullName evidence="1">FMN-dependent NADH-azoreductase</fullName>
        <ecNumber evidence="1">1.7.1.17</ecNumber>
    </alternativeName>
</protein>
<proteinExistence type="inferred from homology"/>
<keyword id="KW-0285">Flavoprotein</keyword>
<keyword id="KW-0288">FMN</keyword>
<keyword id="KW-0520">NAD</keyword>
<keyword id="KW-0560">Oxidoreductase</keyword>
<keyword id="KW-1185">Reference proteome</keyword>
<feature type="chain" id="PRO_1000085580" description="FMN-dependent NADH:quinone oxidoreductase">
    <location>
        <begin position="1"/>
        <end position="198"/>
    </location>
</feature>
<feature type="binding site" evidence="1">
    <location>
        <begin position="92"/>
        <end position="95"/>
    </location>
    <ligand>
        <name>FMN</name>
        <dbReference type="ChEBI" id="CHEBI:58210"/>
    </ligand>
</feature>
<organism>
    <name type="scientific">Lachnoclostridium phytofermentans (strain ATCC 700394 / DSM 18823 / ISDg)</name>
    <name type="common">Clostridium phytofermentans</name>
    <dbReference type="NCBI Taxonomy" id="357809"/>
    <lineage>
        <taxon>Bacteria</taxon>
        <taxon>Bacillati</taxon>
        <taxon>Bacillota</taxon>
        <taxon>Clostridia</taxon>
        <taxon>Lachnospirales</taxon>
        <taxon>Lachnospiraceae</taxon>
    </lineage>
</organism>
<accession>A9KM25</accession>
<gene>
    <name evidence="1" type="primary">azoR</name>
    <name type="ordered locus">Cphy_0988</name>
</gene>
<reference key="1">
    <citation type="submission" date="2007-11" db="EMBL/GenBank/DDBJ databases">
        <title>Complete genome sequence of Clostridium phytofermentans ISDg.</title>
        <authorList>
            <person name="Leschine S.B."/>
            <person name="Warnick T.A."/>
            <person name="Blanchard J.L."/>
            <person name="Schnell D.J."/>
            <person name="Petit E.L."/>
            <person name="LaTouf W.G."/>
            <person name="Copeland A."/>
            <person name="Lucas S."/>
            <person name="Lapidus A."/>
            <person name="Barry K."/>
            <person name="Glavina del Rio T."/>
            <person name="Dalin E."/>
            <person name="Tice H."/>
            <person name="Pitluck S."/>
            <person name="Kiss H."/>
            <person name="Brettin T."/>
            <person name="Bruce D."/>
            <person name="Detter J.C."/>
            <person name="Han C."/>
            <person name="Kuske C."/>
            <person name="Schmutz J."/>
            <person name="Larimer F."/>
            <person name="Land M."/>
            <person name="Hauser L."/>
            <person name="Kyrpides N."/>
            <person name="Kim E.A."/>
            <person name="Richardson P."/>
        </authorList>
    </citation>
    <scope>NUCLEOTIDE SEQUENCE [LARGE SCALE GENOMIC DNA]</scope>
    <source>
        <strain>ATCC 700394 / DSM 18823 / ISDg</strain>
    </source>
</reference>
<evidence type="ECO:0000255" key="1">
    <source>
        <dbReference type="HAMAP-Rule" id="MF_01216"/>
    </source>
</evidence>
<comment type="function">
    <text evidence="1">Quinone reductase that provides resistance to thiol-specific stress caused by electrophilic quinones.</text>
</comment>
<comment type="function">
    <text evidence="1">Also exhibits azoreductase activity. Catalyzes the reductive cleavage of the azo bond in aromatic azo compounds to the corresponding amines.</text>
</comment>
<comment type="catalytic activity">
    <reaction evidence="1">
        <text>2 a quinone + NADH + H(+) = 2 a 1,4-benzosemiquinone + NAD(+)</text>
        <dbReference type="Rhea" id="RHEA:65952"/>
        <dbReference type="ChEBI" id="CHEBI:15378"/>
        <dbReference type="ChEBI" id="CHEBI:57540"/>
        <dbReference type="ChEBI" id="CHEBI:57945"/>
        <dbReference type="ChEBI" id="CHEBI:132124"/>
        <dbReference type="ChEBI" id="CHEBI:134225"/>
    </reaction>
</comment>
<comment type="catalytic activity">
    <reaction evidence="1">
        <text>N,N-dimethyl-1,4-phenylenediamine + anthranilate + 2 NAD(+) = 2-(4-dimethylaminophenyl)diazenylbenzoate + 2 NADH + 2 H(+)</text>
        <dbReference type="Rhea" id="RHEA:55872"/>
        <dbReference type="ChEBI" id="CHEBI:15378"/>
        <dbReference type="ChEBI" id="CHEBI:15783"/>
        <dbReference type="ChEBI" id="CHEBI:16567"/>
        <dbReference type="ChEBI" id="CHEBI:57540"/>
        <dbReference type="ChEBI" id="CHEBI:57945"/>
        <dbReference type="ChEBI" id="CHEBI:71579"/>
        <dbReference type="EC" id="1.7.1.17"/>
    </reaction>
</comment>
<comment type="cofactor">
    <cofactor evidence="1">
        <name>FMN</name>
        <dbReference type="ChEBI" id="CHEBI:58210"/>
    </cofactor>
    <text evidence="1">Binds 1 FMN per subunit.</text>
</comment>
<comment type="subunit">
    <text evidence="1">Homodimer.</text>
</comment>
<comment type="similarity">
    <text evidence="1">Belongs to the azoreductase type 1 family.</text>
</comment>
<name>AZOR_LACP7</name>
<dbReference type="EC" id="1.6.5.-" evidence="1"/>
<dbReference type="EC" id="1.7.1.17" evidence="1"/>
<dbReference type="EMBL" id="CP000885">
    <property type="protein sequence ID" value="ABX41368.1"/>
    <property type="molecule type" value="Genomic_DNA"/>
</dbReference>
<dbReference type="RefSeq" id="WP_012199014.1">
    <property type="nucleotide sequence ID" value="NC_010001.1"/>
</dbReference>
<dbReference type="SMR" id="A9KM25"/>
<dbReference type="KEGG" id="cpy:Cphy_0988"/>
<dbReference type="eggNOG" id="COG1182">
    <property type="taxonomic scope" value="Bacteria"/>
</dbReference>
<dbReference type="HOGENOM" id="CLU_088964_3_1_9"/>
<dbReference type="OrthoDB" id="9805013at2"/>
<dbReference type="Proteomes" id="UP000000370">
    <property type="component" value="Chromosome"/>
</dbReference>
<dbReference type="GO" id="GO:0009055">
    <property type="term" value="F:electron transfer activity"/>
    <property type="evidence" value="ECO:0007669"/>
    <property type="project" value="UniProtKB-UniRule"/>
</dbReference>
<dbReference type="GO" id="GO:0010181">
    <property type="term" value="F:FMN binding"/>
    <property type="evidence" value="ECO:0007669"/>
    <property type="project" value="UniProtKB-UniRule"/>
</dbReference>
<dbReference type="GO" id="GO:0016652">
    <property type="term" value="F:oxidoreductase activity, acting on NAD(P)H as acceptor"/>
    <property type="evidence" value="ECO:0007669"/>
    <property type="project" value="UniProtKB-UniRule"/>
</dbReference>
<dbReference type="GO" id="GO:0016655">
    <property type="term" value="F:oxidoreductase activity, acting on NAD(P)H, quinone or similar compound as acceptor"/>
    <property type="evidence" value="ECO:0007669"/>
    <property type="project" value="InterPro"/>
</dbReference>
<dbReference type="Gene3D" id="3.40.50.360">
    <property type="match status" value="1"/>
</dbReference>
<dbReference type="HAMAP" id="MF_01216">
    <property type="entry name" value="Azoreductase_type1"/>
    <property type="match status" value="1"/>
</dbReference>
<dbReference type="InterPro" id="IPR003680">
    <property type="entry name" value="Flavodoxin_fold"/>
</dbReference>
<dbReference type="InterPro" id="IPR029039">
    <property type="entry name" value="Flavoprotein-like_sf"/>
</dbReference>
<dbReference type="InterPro" id="IPR050104">
    <property type="entry name" value="FMN-dep_NADH:Q_OxRdtase_AzoR1"/>
</dbReference>
<dbReference type="InterPro" id="IPR023048">
    <property type="entry name" value="NADH:quinone_OxRdtase_FMN_depd"/>
</dbReference>
<dbReference type="PANTHER" id="PTHR43741">
    <property type="entry name" value="FMN-DEPENDENT NADH-AZOREDUCTASE 1"/>
    <property type="match status" value="1"/>
</dbReference>
<dbReference type="PANTHER" id="PTHR43741:SF7">
    <property type="entry name" value="FMN-DEPENDENT NADH:QUINONE OXIDOREDUCTASE"/>
    <property type="match status" value="1"/>
</dbReference>
<dbReference type="Pfam" id="PF02525">
    <property type="entry name" value="Flavodoxin_2"/>
    <property type="match status" value="1"/>
</dbReference>
<dbReference type="SUPFAM" id="SSF52218">
    <property type="entry name" value="Flavoproteins"/>
    <property type="match status" value="1"/>
</dbReference>
<sequence>MSKVLYIKANIKLEGVSRTFQVSDHFIEEYKKQHPEDEVVVLDLYKENIDFLRPEDLEAMADINDETKKNTTFLKYAFQFAEADKYVIAAPMWNLGSPAILKAYFDYITITGITFHYTAEGPKGLLQNKKAVHIVARGGEYGNAPYEMGDRYVKTILGFLGVSDIQTIAIENLDIIGADVEAKVKEGKEKAGLVAKEF</sequence>